<name>GREA_TREPS</name>
<accession>B2S1W7</accession>
<dbReference type="EMBL" id="CP000805">
    <property type="protein sequence ID" value="ACD70446.1"/>
    <property type="molecule type" value="Genomic_DNA"/>
</dbReference>
<dbReference type="SMR" id="B2S1W7"/>
<dbReference type="KEGG" id="tpp:TPASS_0019"/>
<dbReference type="Proteomes" id="UP000001202">
    <property type="component" value="Chromosome"/>
</dbReference>
<dbReference type="GO" id="GO:0003677">
    <property type="term" value="F:DNA binding"/>
    <property type="evidence" value="ECO:0007669"/>
    <property type="project" value="UniProtKB-UniRule"/>
</dbReference>
<dbReference type="GO" id="GO:0070063">
    <property type="term" value="F:RNA polymerase binding"/>
    <property type="evidence" value="ECO:0007669"/>
    <property type="project" value="InterPro"/>
</dbReference>
<dbReference type="GO" id="GO:0006354">
    <property type="term" value="P:DNA-templated transcription elongation"/>
    <property type="evidence" value="ECO:0007669"/>
    <property type="project" value="TreeGrafter"/>
</dbReference>
<dbReference type="GO" id="GO:0032784">
    <property type="term" value="P:regulation of DNA-templated transcription elongation"/>
    <property type="evidence" value="ECO:0007669"/>
    <property type="project" value="UniProtKB-UniRule"/>
</dbReference>
<dbReference type="FunFam" id="1.10.287.180:FF:000001">
    <property type="entry name" value="Transcription elongation factor GreA"/>
    <property type="match status" value="1"/>
</dbReference>
<dbReference type="Gene3D" id="3.10.50.30">
    <property type="entry name" value="Transcription elongation factor, GreA/GreB, C-terminal domain"/>
    <property type="match status" value="1"/>
</dbReference>
<dbReference type="Gene3D" id="1.10.287.180">
    <property type="entry name" value="Transcription elongation factor, GreA/GreB, N-terminal domain"/>
    <property type="match status" value="1"/>
</dbReference>
<dbReference type="HAMAP" id="MF_00105">
    <property type="entry name" value="GreA_GreB"/>
    <property type="match status" value="1"/>
</dbReference>
<dbReference type="InterPro" id="IPR036953">
    <property type="entry name" value="GreA/GreB_C_sf"/>
</dbReference>
<dbReference type="InterPro" id="IPR018151">
    <property type="entry name" value="TF_GreA/GreB_CS"/>
</dbReference>
<dbReference type="InterPro" id="IPR006359">
    <property type="entry name" value="Tscrpt_elong_fac_GreA"/>
</dbReference>
<dbReference type="InterPro" id="IPR028624">
    <property type="entry name" value="Tscrpt_elong_fac_GreA/B"/>
</dbReference>
<dbReference type="InterPro" id="IPR001437">
    <property type="entry name" value="Tscrpt_elong_fac_GreA/B_C"/>
</dbReference>
<dbReference type="InterPro" id="IPR023459">
    <property type="entry name" value="Tscrpt_elong_fac_GreA/B_fam"/>
</dbReference>
<dbReference type="InterPro" id="IPR022691">
    <property type="entry name" value="Tscrpt_elong_fac_GreA/B_N"/>
</dbReference>
<dbReference type="InterPro" id="IPR036805">
    <property type="entry name" value="Tscrpt_elong_fac_GreA/B_N_sf"/>
</dbReference>
<dbReference type="NCBIfam" id="TIGR01462">
    <property type="entry name" value="greA"/>
    <property type="match status" value="1"/>
</dbReference>
<dbReference type="PANTHER" id="PTHR30437">
    <property type="entry name" value="TRANSCRIPTION ELONGATION FACTOR GREA"/>
    <property type="match status" value="1"/>
</dbReference>
<dbReference type="PANTHER" id="PTHR30437:SF4">
    <property type="entry name" value="TRANSCRIPTION ELONGATION FACTOR GREA"/>
    <property type="match status" value="1"/>
</dbReference>
<dbReference type="Pfam" id="PF01272">
    <property type="entry name" value="GreA_GreB"/>
    <property type="match status" value="1"/>
</dbReference>
<dbReference type="Pfam" id="PF03449">
    <property type="entry name" value="GreA_GreB_N"/>
    <property type="match status" value="1"/>
</dbReference>
<dbReference type="PIRSF" id="PIRSF006092">
    <property type="entry name" value="GreA_GreB"/>
    <property type="match status" value="1"/>
</dbReference>
<dbReference type="SUPFAM" id="SSF54534">
    <property type="entry name" value="FKBP-like"/>
    <property type="match status" value="1"/>
</dbReference>
<dbReference type="SUPFAM" id="SSF46557">
    <property type="entry name" value="GreA transcript cleavage protein, N-terminal domain"/>
    <property type="match status" value="1"/>
</dbReference>
<dbReference type="PROSITE" id="PS00829">
    <property type="entry name" value="GREAB_1"/>
    <property type="match status" value="1"/>
</dbReference>
<dbReference type="PROSITE" id="PS00830">
    <property type="entry name" value="GREAB_2"/>
    <property type="match status" value="1"/>
</dbReference>
<protein>
    <recommendedName>
        <fullName evidence="1">Transcription elongation factor GreA</fullName>
    </recommendedName>
    <alternativeName>
        <fullName evidence="1">Transcript cleavage factor GreA</fullName>
    </alternativeName>
</protein>
<evidence type="ECO:0000255" key="1">
    <source>
        <dbReference type="HAMAP-Rule" id="MF_00105"/>
    </source>
</evidence>
<reference key="1">
    <citation type="journal article" date="2008" name="BMC Microbiol.">
        <title>Complete genome sequence of Treponema pallidum ssp. pallidum strain SS14 determined with oligonucleotide arrays.</title>
        <authorList>
            <person name="Matejkova P."/>
            <person name="Strouhal M."/>
            <person name="Smajs D."/>
            <person name="Norris S.J."/>
            <person name="Palzkill T."/>
            <person name="Petrosino J.F."/>
            <person name="Sodergren E."/>
            <person name="Norton J.E."/>
            <person name="Singh J."/>
            <person name="Richmond T.A."/>
            <person name="Molla M.N."/>
            <person name="Albert T.J."/>
            <person name="Weinstock G.M."/>
        </authorList>
    </citation>
    <scope>NUCLEOTIDE SEQUENCE [LARGE SCALE GENOMIC DNA]</scope>
    <source>
        <strain>SS14</strain>
    </source>
</reference>
<comment type="function">
    <text evidence="1">Necessary for efficient RNA polymerase transcription elongation past template-encoded arresting sites. The arresting sites in DNA have the property of trapping a certain fraction of elongating RNA polymerases that pass through, resulting in locked ternary complexes. Cleavage of the nascent transcript by cleavage factors such as GreA or GreB allows the resumption of elongation from the new 3'terminus. GreA releases sequences of 2 to 3 nucleotides.</text>
</comment>
<comment type="similarity">
    <text evidence="1">Belongs to the GreA/GreB family.</text>
</comment>
<proteinExistence type="inferred from homology"/>
<feature type="chain" id="PRO_1000094207" description="Transcription elongation factor GreA">
    <location>
        <begin position="1"/>
        <end position="162"/>
    </location>
</feature>
<feature type="coiled-coil region" evidence="1">
    <location>
        <begin position="46"/>
        <end position="77"/>
    </location>
</feature>
<organism>
    <name type="scientific">Treponema pallidum subsp. pallidum (strain SS14)</name>
    <dbReference type="NCBI Taxonomy" id="455434"/>
    <lineage>
        <taxon>Bacteria</taxon>
        <taxon>Pseudomonadati</taxon>
        <taxon>Spirochaetota</taxon>
        <taxon>Spirochaetia</taxon>
        <taxon>Spirochaetales</taxon>
        <taxon>Treponemataceae</taxon>
        <taxon>Treponema</taxon>
    </lineage>
</organism>
<keyword id="KW-0175">Coiled coil</keyword>
<keyword id="KW-0238">DNA-binding</keyword>
<keyword id="KW-0804">Transcription</keyword>
<keyword id="KW-0805">Transcription regulation</keyword>
<sequence>MVSGRGLVVTAKMLNAKKKELQDLLDVRIPENSREIGRALELGDLRENAEYKAAREEQTRLNNMVTRLQEEIERAQVFDPTTVVAGRVSFGTVISLKNHTSGEDETYTILGPWESAPERGIISYMSPLGSNLLNRKTGEQLAFTVGEHEKVYEILSISAAEI</sequence>
<gene>
    <name evidence="1" type="primary">greA</name>
    <name type="ordered locus">TPASS_0019</name>
</gene>